<protein>
    <recommendedName>
        <fullName evidence="1">Octanoyltransferase</fullName>
        <ecNumber evidence="1">2.3.1.181</ecNumber>
    </recommendedName>
    <alternativeName>
        <fullName evidence="1">Lipoate-protein ligase B</fullName>
    </alternativeName>
    <alternativeName>
        <fullName evidence="1">Lipoyl/octanoyl transferase</fullName>
    </alternativeName>
    <alternativeName>
        <fullName evidence="1">Octanoyl-[acyl-carrier-protein]-protein N-octanoyltransferase</fullName>
    </alternativeName>
</protein>
<keyword id="KW-0012">Acyltransferase</keyword>
<keyword id="KW-0963">Cytoplasm</keyword>
<keyword id="KW-0808">Transferase</keyword>
<proteinExistence type="inferred from homology"/>
<evidence type="ECO:0000255" key="1">
    <source>
        <dbReference type="HAMAP-Rule" id="MF_00013"/>
    </source>
</evidence>
<evidence type="ECO:0000255" key="2">
    <source>
        <dbReference type="PROSITE-ProRule" id="PRU01067"/>
    </source>
</evidence>
<name>LIPB_ECO81</name>
<organism>
    <name type="scientific">Escherichia coli O81 (strain ED1a)</name>
    <dbReference type="NCBI Taxonomy" id="585397"/>
    <lineage>
        <taxon>Bacteria</taxon>
        <taxon>Pseudomonadati</taxon>
        <taxon>Pseudomonadota</taxon>
        <taxon>Gammaproteobacteria</taxon>
        <taxon>Enterobacterales</taxon>
        <taxon>Enterobacteriaceae</taxon>
        <taxon>Escherichia</taxon>
    </lineage>
</organism>
<sequence length="213" mass="23883">MYQDKILVRQLGLQPYEPISQAMHEFTDTRDDSTLDEIWLVEHYPVFTQGQAGKAEHILMPGDIPVIQSDRGGQVTYHGPGQQVMYVLLNLKRRKLGVRELVTLLEQTVVNTLAELGIEAHPRADAPGVYVGEKKICSLGLRIRRGCSFHGLALNVNMDLSPFLRINPCGYAGMEMAKISQWKPEATTNNIAPRLLENILALLNNPDFEYITA</sequence>
<comment type="function">
    <text evidence="1">Catalyzes the transfer of endogenously produced octanoic acid from octanoyl-acyl-carrier-protein onto the lipoyl domains of lipoate-dependent enzymes. Lipoyl-ACP can also act as a substrate although octanoyl-ACP is likely to be the physiological substrate.</text>
</comment>
<comment type="catalytic activity">
    <reaction evidence="1">
        <text>octanoyl-[ACP] + L-lysyl-[protein] = N(6)-octanoyl-L-lysyl-[protein] + holo-[ACP] + H(+)</text>
        <dbReference type="Rhea" id="RHEA:17665"/>
        <dbReference type="Rhea" id="RHEA-COMP:9636"/>
        <dbReference type="Rhea" id="RHEA-COMP:9685"/>
        <dbReference type="Rhea" id="RHEA-COMP:9752"/>
        <dbReference type="Rhea" id="RHEA-COMP:9928"/>
        <dbReference type="ChEBI" id="CHEBI:15378"/>
        <dbReference type="ChEBI" id="CHEBI:29969"/>
        <dbReference type="ChEBI" id="CHEBI:64479"/>
        <dbReference type="ChEBI" id="CHEBI:78463"/>
        <dbReference type="ChEBI" id="CHEBI:78809"/>
        <dbReference type="EC" id="2.3.1.181"/>
    </reaction>
</comment>
<comment type="pathway">
    <text evidence="1">Protein modification; protein lipoylation via endogenous pathway; protein N(6)-(lipoyl)lysine from octanoyl-[acyl-carrier-protein]: step 1/2.</text>
</comment>
<comment type="subcellular location">
    <subcellularLocation>
        <location evidence="1">Cytoplasm</location>
    </subcellularLocation>
</comment>
<comment type="miscellaneous">
    <text evidence="1">In the reaction, the free carboxyl group of octanoic acid is attached via an amide linkage to the epsilon-amino group of a specific lysine residue of lipoyl domains of lipoate-dependent enzymes.</text>
</comment>
<comment type="similarity">
    <text evidence="1">Belongs to the LipB family.</text>
</comment>
<reference key="1">
    <citation type="journal article" date="2009" name="PLoS Genet.">
        <title>Organised genome dynamics in the Escherichia coli species results in highly diverse adaptive paths.</title>
        <authorList>
            <person name="Touchon M."/>
            <person name="Hoede C."/>
            <person name="Tenaillon O."/>
            <person name="Barbe V."/>
            <person name="Baeriswyl S."/>
            <person name="Bidet P."/>
            <person name="Bingen E."/>
            <person name="Bonacorsi S."/>
            <person name="Bouchier C."/>
            <person name="Bouvet O."/>
            <person name="Calteau A."/>
            <person name="Chiapello H."/>
            <person name="Clermont O."/>
            <person name="Cruveiller S."/>
            <person name="Danchin A."/>
            <person name="Diard M."/>
            <person name="Dossat C."/>
            <person name="Karoui M.E."/>
            <person name="Frapy E."/>
            <person name="Garry L."/>
            <person name="Ghigo J.M."/>
            <person name="Gilles A.M."/>
            <person name="Johnson J."/>
            <person name="Le Bouguenec C."/>
            <person name="Lescat M."/>
            <person name="Mangenot S."/>
            <person name="Martinez-Jehanne V."/>
            <person name="Matic I."/>
            <person name="Nassif X."/>
            <person name="Oztas S."/>
            <person name="Petit M.A."/>
            <person name="Pichon C."/>
            <person name="Rouy Z."/>
            <person name="Ruf C.S."/>
            <person name="Schneider D."/>
            <person name="Tourret J."/>
            <person name="Vacherie B."/>
            <person name="Vallenet D."/>
            <person name="Medigue C."/>
            <person name="Rocha E.P.C."/>
            <person name="Denamur E."/>
        </authorList>
    </citation>
    <scope>NUCLEOTIDE SEQUENCE [LARGE SCALE GENOMIC DNA]</scope>
    <source>
        <strain>ED1a</strain>
    </source>
</reference>
<gene>
    <name evidence="1" type="primary">lipB</name>
    <name type="ordered locus">ECED1_0626</name>
</gene>
<accession>B7MRR7</accession>
<feature type="chain" id="PRO_1000116547" description="Octanoyltransferase">
    <location>
        <begin position="1"/>
        <end position="213"/>
    </location>
</feature>
<feature type="domain" description="BPL/LPL catalytic" evidence="2">
    <location>
        <begin position="32"/>
        <end position="207"/>
    </location>
</feature>
<feature type="active site" description="Acyl-thioester intermediate" evidence="1">
    <location>
        <position position="169"/>
    </location>
</feature>
<feature type="binding site" evidence="1">
    <location>
        <begin position="71"/>
        <end position="78"/>
    </location>
    <ligand>
        <name>substrate</name>
    </ligand>
</feature>
<feature type="binding site" evidence="1">
    <location>
        <begin position="138"/>
        <end position="140"/>
    </location>
    <ligand>
        <name>substrate</name>
    </ligand>
</feature>
<feature type="binding site" evidence="1">
    <location>
        <begin position="151"/>
        <end position="153"/>
    </location>
    <ligand>
        <name>substrate</name>
    </ligand>
</feature>
<feature type="site" description="Lowers pKa of active site Cys" evidence="1">
    <location>
        <position position="135"/>
    </location>
</feature>
<dbReference type="EC" id="2.3.1.181" evidence="1"/>
<dbReference type="EMBL" id="CU928162">
    <property type="protein sequence ID" value="CAR06834.1"/>
    <property type="molecule type" value="Genomic_DNA"/>
</dbReference>
<dbReference type="RefSeq" id="WP_000284027.1">
    <property type="nucleotide sequence ID" value="NC_011745.1"/>
</dbReference>
<dbReference type="SMR" id="B7MRR7"/>
<dbReference type="GeneID" id="93776852"/>
<dbReference type="KEGG" id="ecq:ECED1_0626"/>
<dbReference type="HOGENOM" id="CLU_035168_3_1_6"/>
<dbReference type="UniPathway" id="UPA00538">
    <property type="reaction ID" value="UER00592"/>
</dbReference>
<dbReference type="Proteomes" id="UP000000748">
    <property type="component" value="Chromosome"/>
</dbReference>
<dbReference type="GO" id="GO:0005737">
    <property type="term" value="C:cytoplasm"/>
    <property type="evidence" value="ECO:0007669"/>
    <property type="project" value="UniProtKB-SubCell"/>
</dbReference>
<dbReference type="GO" id="GO:0033819">
    <property type="term" value="F:lipoyl(octanoyl) transferase activity"/>
    <property type="evidence" value="ECO:0007669"/>
    <property type="project" value="UniProtKB-EC"/>
</dbReference>
<dbReference type="GO" id="GO:0036211">
    <property type="term" value="P:protein modification process"/>
    <property type="evidence" value="ECO:0007669"/>
    <property type="project" value="InterPro"/>
</dbReference>
<dbReference type="CDD" id="cd16444">
    <property type="entry name" value="LipB"/>
    <property type="match status" value="1"/>
</dbReference>
<dbReference type="FunFam" id="3.30.930.10:FF:000020">
    <property type="entry name" value="Octanoyltransferase"/>
    <property type="match status" value="1"/>
</dbReference>
<dbReference type="Gene3D" id="3.30.930.10">
    <property type="entry name" value="Bira Bifunctional Protein, Domain 2"/>
    <property type="match status" value="1"/>
</dbReference>
<dbReference type="HAMAP" id="MF_00013">
    <property type="entry name" value="LipB"/>
    <property type="match status" value="1"/>
</dbReference>
<dbReference type="InterPro" id="IPR045864">
    <property type="entry name" value="aa-tRNA-synth_II/BPL/LPL"/>
</dbReference>
<dbReference type="InterPro" id="IPR004143">
    <property type="entry name" value="BPL_LPL_catalytic"/>
</dbReference>
<dbReference type="InterPro" id="IPR000544">
    <property type="entry name" value="Octanoyltransferase"/>
</dbReference>
<dbReference type="InterPro" id="IPR020605">
    <property type="entry name" value="Octanoyltransferase_CS"/>
</dbReference>
<dbReference type="NCBIfam" id="TIGR00214">
    <property type="entry name" value="lipB"/>
    <property type="match status" value="1"/>
</dbReference>
<dbReference type="NCBIfam" id="NF010922">
    <property type="entry name" value="PRK14342.1"/>
    <property type="match status" value="1"/>
</dbReference>
<dbReference type="PANTHER" id="PTHR10993:SF7">
    <property type="entry name" value="LIPOYLTRANSFERASE 2, MITOCHONDRIAL-RELATED"/>
    <property type="match status" value="1"/>
</dbReference>
<dbReference type="PANTHER" id="PTHR10993">
    <property type="entry name" value="OCTANOYLTRANSFERASE"/>
    <property type="match status" value="1"/>
</dbReference>
<dbReference type="Pfam" id="PF21948">
    <property type="entry name" value="LplA-B_cat"/>
    <property type="match status" value="1"/>
</dbReference>
<dbReference type="PIRSF" id="PIRSF016262">
    <property type="entry name" value="LPLase"/>
    <property type="match status" value="1"/>
</dbReference>
<dbReference type="SUPFAM" id="SSF55681">
    <property type="entry name" value="Class II aaRS and biotin synthetases"/>
    <property type="match status" value="1"/>
</dbReference>
<dbReference type="PROSITE" id="PS51733">
    <property type="entry name" value="BPL_LPL_CATALYTIC"/>
    <property type="match status" value="1"/>
</dbReference>
<dbReference type="PROSITE" id="PS01313">
    <property type="entry name" value="LIPB"/>
    <property type="match status" value="1"/>
</dbReference>